<name>UPK1B_HUMAN</name>
<protein>
    <recommendedName>
        <fullName>Uroplakin-1b</fullName>
        <shortName>UP1b</shortName>
    </recommendedName>
    <alternativeName>
        <fullName>Tetraspanin-20</fullName>
        <shortName>Tspan-20</shortName>
    </alternativeName>
    <alternativeName>
        <fullName>Uroplakin Ib</fullName>
        <shortName>UPIb</shortName>
    </alternativeName>
</protein>
<accession>O75841</accession>
<accession>O60753</accession>
<accession>Q9UIM2</accession>
<accession>Q9UNX6</accession>
<sequence length="260" mass="29643">MAKDNSTVRCFQGLLIFGNVIIGCCGIALTAECIFFVSDQHSLYPLLEATDNDDIYGAAWIGIFVGICLFCLSVLGIVGIMKSSRKILLAYFILMFIVYAFEVASCITAATQQDFFTPNLFLKQMLERYQNNSPPNNDDQWKNNGVTKTWDRLMLQDNCCGVNGPSDWQKYTSAFRTENNDADYPWPRQCCVMNNLKEPLNLEACKLGVPGFYHNQGCYELISGPMNRHAWGVAWFGFAILCWTFWVLLGTMFYWSRIEY</sequence>
<gene>
    <name type="primary">UPK1B</name>
    <name type="synonym">TSPAN20</name>
</gene>
<proteinExistence type="evidence at protein level"/>
<reference key="1">
    <citation type="journal article" date="1998" name="Jpn. J. Cancer Res.">
        <title>Expression of uroplakin Ib and uroplakin III genes in tissues and peripheral blood of patients with transitional cell carcinoma.</title>
        <authorList>
            <person name="Yuasa T."/>
            <person name="Yoshiki T."/>
            <person name="Tanaka T."/>
            <person name="Kim C.J."/>
            <person name="Isono T."/>
            <person name="Okada Y."/>
        </authorList>
    </citation>
    <scope>NUCLEOTIDE SEQUENCE [MRNA]</scope>
    <scope>VARIANT ARG-113</scope>
    <source>
        <tissue>Urinary bladder urothelium</tissue>
    </source>
</reference>
<reference key="2">
    <citation type="journal article" date="1999" name="Int. J. Cancer">
        <title>Cloning of the human uroplakin 1B cDNA and analysis of its expression in urothelial-tumor cell lines and bladder-carcinoma tissue.</title>
        <authorList>
            <person name="Finch J.L."/>
            <person name="Miller J."/>
            <person name="Aspinall J.O."/>
            <person name="Cowled P.A."/>
        </authorList>
    </citation>
    <scope>NUCLEOTIDE SEQUENCE [MRNA]</scope>
    <scope>VARIANT ARG-113</scope>
    <source>
        <tissue>Urothelium</tissue>
    </source>
</reference>
<reference key="3">
    <citation type="submission" date="1997-03" db="EMBL/GenBank/DDBJ databases">
        <title>Molecular cloning of human uroplakin Ib cDNA.</title>
        <authorList>
            <person name="Adachi W."/>
            <person name="Nishida K."/>
            <person name="Kinoshita S."/>
            <person name="Matsubara K."/>
            <person name="Okubo K."/>
        </authorList>
    </citation>
    <scope>NUCLEOTIDE SEQUENCE [MRNA]</scope>
    <source>
        <tissue>Corneal epithelium</tissue>
    </source>
</reference>
<reference key="4">
    <citation type="journal article" date="2006" name="Nature">
        <title>The DNA sequence, annotation and analysis of human chromosome 3.</title>
        <authorList>
            <person name="Muzny D.M."/>
            <person name="Scherer S.E."/>
            <person name="Kaul R."/>
            <person name="Wang J."/>
            <person name="Yu J."/>
            <person name="Sudbrak R."/>
            <person name="Buhay C.J."/>
            <person name="Chen R."/>
            <person name="Cree A."/>
            <person name="Ding Y."/>
            <person name="Dugan-Rocha S."/>
            <person name="Gill R."/>
            <person name="Gunaratne P."/>
            <person name="Harris R.A."/>
            <person name="Hawes A.C."/>
            <person name="Hernandez J."/>
            <person name="Hodgson A.V."/>
            <person name="Hume J."/>
            <person name="Jackson A."/>
            <person name="Khan Z.M."/>
            <person name="Kovar-Smith C."/>
            <person name="Lewis L.R."/>
            <person name="Lozado R.J."/>
            <person name="Metzker M.L."/>
            <person name="Milosavljevic A."/>
            <person name="Miner G.R."/>
            <person name="Morgan M.B."/>
            <person name="Nazareth L.V."/>
            <person name="Scott G."/>
            <person name="Sodergren E."/>
            <person name="Song X.-Z."/>
            <person name="Steffen D."/>
            <person name="Wei S."/>
            <person name="Wheeler D.A."/>
            <person name="Wright M.W."/>
            <person name="Worley K.C."/>
            <person name="Yuan Y."/>
            <person name="Zhang Z."/>
            <person name="Adams C.Q."/>
            <person name="Ansari-Lari M.A."/>
            <person name="Ayele M."/>
            <person name="Brown M.J."/>
            <person name="Chen G."/>
            <person name="Chen Z."/>
            <person name="Clendenning J."/>
            <person name="Clerc-Blankenburg K.P."/>
            <person name="Chen R."/>
            <person name="Chen Z."/>
            <person name="Davis C."/>
            <person name="Delgado O."/>
            <person name="Dinh H.H."/>
            <person name="Dong W."/>
            <person name="Draper H."/>
            <person name="Ernst S."/>
            <person name="Fu G."/>
            <person name="Gonzalez-Garay M.L."/>
            <person name="Garcia D.K."/>
            <person name="Gillett W."/>
            <person name="Gu J."/>
            <person name="Hao B."/>
            <person name="Haugen E."/>
            <person name="Havlak P."/>
            <person name="He X."/>
            <person name="Hennig S."/>
            <person name="Hu S."/>
            <person name="Huang W."/>
            <person name="Jackson L.R."/>
            <person name="Jacob L.S."/>
            <person name="Kelly S.H."/>
            <person name="Kube M."/>
            <person name="Levy R."/>
            <person name="Li Z."/>
            <person name="Liu B."/>
            <person name="Liu J."/>
            <person name="Liu W."/>
            <person name="Lu J."/>
            <person name="Maheshwari M."/>
            <person name="Nguyen B.-V."/>
            <person name="Okwuonu G.O."/>
            <person name="Palmeiri A."/>
            <person name="Pasternak S."/>
            <person name="Perez L.M."/>
            <person name="Phelps K.A."/>
            <person name="Plopper F.J."/>
            <person name="Qiang B."/>
            <person name="Raymond C."/>
            <person name="Rodriguez R."/>
            <person name="Saenphimmachak C."/>
            <person name="Santibanez J."/>
            <person name="Shen H."/>
            <person name="Shen Y."/>
            <person name="Subramanian S."/>
            <person name="Tabor P.E."/>
            <person name="Verduzco D."/>
            <person name="Waldron L."/>
            <person name="Wang J."/>
            <person name="Wang J."/>
            <person name="Wang Q."/>
            <person name="Williams G.A."/>
            <person name="Wong G.K.-S."/>
            <person name="Yao Z."/>
            <person name="Zhang J."/>
            <person name="Zhang X."/>
            <person name="Zhao G."/>
            <person name="Zhou J."/>
            <person name="Zhou Y."/>
            <person name="Nelson D."/>
            <person name="Lehrach H."/>
            <person name="Reinhardt R."/>
            <person name="Naylor S.L."/>
            <person name="Yang H."/>
            <person name="Olson M."/>
            <person name="Weinstock G."/>
            <person name="Gibbs R.A."/>
        </authorList>
    </citation>
    <scope>NUCLEOTIDE SEQUENCE [LARGE SCALE GENOMIC DNA]</scope>
</reference>
<reference key="5">
    <citation type="journal article" date="2004" name="Genome Res.">
        <title>The status, quality, and expansion of the NIH full-length cDNA project: the Mammalian Gene Collection (MGC).</title>
        <authorList>
            <consortium name="The MGC Project Team"/>
        </authorList>
    </citation>
    <scope>NUCLEOTIDE SEQUENCE [LARGE SCALE MRNA]</scope>
    <scope>VARIANT ARG-113</scope>
    <source>
        <tissue>Ovary</tissue>
    </source>
</reference>
<reference key="6">
    <citation type="journal article" date="1998" name="Am. J. Pathol.">
        <title>Uroplakin gene expression by normal and neoplastic human urothelium.</title>
        <authorList>
            <person name="Lobban E.D."/>
            <person name="Smith B.A."/>
            <person name="Hall G.D."/>
            <person name="Harnden P."/>
            <person name="Roberts P."/>
            <person name="Selby P.J."/>
            <person name="Trejdosiewicz L.K."/>
            <person name="Southgate J."/>
        </authorList>
    </citation>
    <scope>NUCLEOTIDE SEQUENCE [MRNA] OF 11-252</scope>
    <scope>VARIANT ARG-113</scope>
</reference>
<reference key="7">
    <citation type="journal article" date="1997" name="Genomics">
        <title>Chromosomal localization of the human urothelial 'tetraspan' gene, UPK1B, to 3q13.3-q21 and detection of a TaqI polymorphism.</title>
        <authorList>
            <person name="Finch J.L."/>
            <person name="Webb G.C."/>
            <person name="Evdokiou A."/>
            <person name="Cowled P.A."/>
        </authorList>
    </citation>
    <scope>NUCLEOTIDE SEQUENCE [GENOMIC DNA] OF 103-142</scope>
    <scope>VARIANT ARG-113</scope>
</reference>
<comment type="function">
    <text evidence="1">Component of the asymmetric unit membrane (AUM); a highly specialized biomembrane elaborated by terminally differentiated urothelial cells. May play an important role in normal bladder epithelial physiology, possibly in regulating membrane permeability of superficial umbrella cells or in stabilizing the apical membrane through AUM/cytoskeletal interactions (By similarity).</text>
</comment>
<comment type="subunit">
    <text evidence="1">Heterodimer with uroplakin-3A (UPK3A) or uroplakin-3B (UPK3B).</text>
</comment>
<comment type="interaction">
    <interactant intactId="EBI-12237619">
        <id>O75841</id>
    </interactant>
    <interactant intactId="EBI-19947314">
        <id>Q8NFU1</id>
        <label>BEST2</label>
    </interactant>
    <organismsDiffer>false</organismsDiffer>
    <experiments>3</experiments>
</comment>
<comment type="interaction">
    <interactant intactId="EBI-12237619">
        <id>O75841</id>
    </interactant>
    <interactant intactId="EBI-6657396">
        <id>P19397</id>
        <label>CD53</label>
    </interactant>
    <organismsDiffer>false</organismsDiffer>
    <experiments>3</experiments>
</comment>
<comment type="interaction">
    <interactant intactId="EBI-12237619">
        <id>O75841</id>
    </interactant>
    <interactant intactId="EBI-2836595">
        <id>Q07108</id>
        <label>CD69</label>
    </interactant>
    <organismsDiffer>false</organismsDiffer>
    <experiments>3</experiments>
</comment>
<comment type="interaction">
    <interactant intactId="EBI-12237619">
        <id>O75841</id>
    </interactant>
    <interactant intactId="EBI-2622997">
        <id>Q9HA82</id>
        <label>CERS4</label>
    </interactant>
    <organismsDiffer>false</organismsDiffer>
    <experiments>3</experiments>
</comment>
<comment type="interaction">
    <interactant intactId="EBI-12237619">
        <id>O75841</id>
    </interactant>
    <interactant intactId="EBI-740744">
        <id>O95471</id>
        <label>CLDN7</label>
    </interactant>
    <organismsDiffer>false</organismsDiffer>
    <experiments>3</experiments>
</comment>
<comment type="interaction">
    <interactant intactId="EBI-12237619">
        <id>O75841</id>
    </interactant>
    <interactant intactId="EBI-12808806">
        <id>Q9Y4D2</id>
        <label>DAGLA</label>
    </interactant>
    <organismsDiffer>false</organismsDiffer>
    <experiments>6</experiments>
</comment>
<comment type="interaction">
    <interactant intactId="EBI-12237619">
        <id>O75841</id>
    </interactant>
    <interactant intactId="EBI-12964110">
        <id>Q9UNE0-2</id>
        <label>EDAR</label>
    </interactant>
    <organismsDiffer>false</organismsDiffer>
    <experiments>3</experiments>
</comment>
<comment type="interaction">
    <interactant intactId="EBI-12237619">
        <id>O75841</id>
    </interactant>
    <interactant intactId="EBI-18304435">
        <id>Q5JX71</id>
        <label>FAM209A</label>
    </interactant>
    <organismsDiffer>false</organismsDiffer>
    <experiments>3</experiments>
</comment>
<comment type="interaction">
    <interactant intactId="EBI-12237619">
        <id>O75841</id>
    </interactant>
    <interactant intactId="EBI-2833872">
        <id>O15552</id>
        <label>FFAR2</label>
    </interactant>
    <organismsDiffer>false</organismsDiffer>
    <experiments>3</experiments>
</comment>
<comment type="interaction">
    <interactant intactId="EBI-12237619">
        <id>O75841</id>
    </interactant>
    <interactant intactId="EBI-3918971">
        <id>Q9Y680</id>
        <label>FKBP7</label>
    </interactant>
    <organismsDiffer>false</organismsDiffer>
    <experiments>3</experiments>
</comment>
<comment type="interaction">
    <interactant intactId="EBI-12237619">
        <id>O75841</id>
    </interactant>
    <interactant intactId="EBI-12142257">
        <id>Q8TBE3</id>
        <label>FNDC9</label>
    </interactant>
    <organismsDiffer>false</organismsDiffer>
    <experiments>3</experiments>
</comment>
<comment type="interaction">
    <interactant intactId="EBI-12237619">
        <id>O75841</id>
    </interactant>
    <interactant intactId="EBI-17458373">
        <id>P48165</id>
        <label>GJA8</label>
    </interactant>
    <organismsDiffer>false</organismsDiffer>
    <experiments>3</experiments>
</comment>
<comment type="interaction">
    <interactant intactId="EBI-12237619">
        <id>O75841</id>
    </interactant>
    <interactant intactId="EBI-17565645">
        <id>P08034</id>
        <label>GJB1</label>
    </interactant>
    <organismsDiffer>false</organismsDiffer>
    <experiments>3</experiments>
</comment>
<comment type="interaction">
    <interactant intactId="EBI-12237619">
        <id>O75841</id>
    </interactant>
    <interactant intactId="EBI-6255622">
        <id>Q8N6U8</id>
        <label>GPR161</label>
    </interactant>
    <organismsDiffer>false</organismsDiffer>
    <experiments>3</experiments>
</comment>
<comment type="interaction">
    <interactant intactId="EBI-12237619">
        <id>O75841</id>
    </interactant>
    <interactant intactId="EBI-2927498">
        <id>O60883</id>
        <label>GPR37L1</label>
    </interactant>
    <organismsDiffer>false</organismsDiffer>
    <experiments>3</experiments>
</comment>
<comment type="interaction">
    <interactant intactId="EBI-12237619">
        <id>O75841</id>
    </interactant>
    <interactant intactId="EBI-11721746">
        <id>Q8TED1</id>
        <label>GPX8</label>
    </interactant>
    <organismsDiffer>false</organismsDiffer>
    <experiments>3</experiments>
</comment>
<comment type="interaction">
    <interactant intactId="EBI-12237619">
        <id>O75841</id>
    </interactant>
    <interactant intactId="EBI-1266923">
        <id>Q6UXK2</id>
        <label>ISLR2</label>
    </interactant>
    <organismsDiffer>false</organismsDiffer>
    <experiments>3</experiments>
</comment>
<comment type="interaction">
    <interactant intactId="EBI-12237619">
        <id>O75841</id>
    </interactant>
    <interactant intactId="EBI-300173">
        <id>P05107</id>
        <label>ITGB2</label>
    </interactant>
    <organismsDiffer>false</organismsDiffer>
    <experiments>3</experiments>
</comment>
<comment type="interaction">
    <interactant intactId="EBI-12237619">
        <id>O75841</id>
    </interactant>
    <interactant intactId="EBI-749265">
        <id>Q8N6L0</id>
        <label>KASH5</label>
    </interactant>
    <organismsDiffer>false</organismsDiffer>
    <experiments>3</experiments>
</comment>
<comment type="interaction">
    <interactant intactId="EBI-12237619">
        <id>O75841</id>
    </interactant>
    <interactant intactId="EBI-12017638">
        <id>P48051</id>
        <label>KCNJ6</label>
    </interactant>
    <organismsDiffer>false</organismsDiffer>
    <experiments>3</experiments>
</comment>
<comment type="interaction">
    <interactant intactId="EBI-12237619">
        <id>O75841</id>
    </interactant>
    <interactant intactId="EBI-8632435">
        <id>P43628</id>
        <label>KIR2DL3</label>
    </interactant>
    <organismsDiffer>false</organismsDiffer>
    <experiments>3</experiments>
</comment>
<comment type="interaction">
    <interactant intactId="EBI-12237619">
        <id>O75841</id>
    </interactant>
    <interactant intactId="EBI-9018187">
        <id>P26715</id>
        <label>KLRC1</label>
    </interactant>
    <organismsDiffer>false</organismsDiffer>
    <experiments>3</experiments>
</comment>
<comment type="interaction">
    <interactant intactId="EBI-12237619">
        <id>O75841</id>
    </interactant>
    <interactant intactId="EBI-11956541">
        <id>Q9GZY8-5</id>
        <label>MFF</label>
    </interactant>
    <organismsDiffer>false</organismsDiffer>
    <experiments>3</experiments>
</comment>
<comment type="interaction">
    <interactant intactId="EBI-12237619">
        <id>O75841</id>
    </interactant>
    <interactant intactId="EBI-12820341">
        <id>Q96JQ5</id>
        <label>MS4A4A</label>
    </interactant>
    <organismsDiffer>false</organismsDiffer>
    <experiments>3</experiments>
</comment>
<comment type="interaction">
    <interactant intactId="EBI-12237619">
        <id>O75841</id>
    </interactant>
    <interactant intactId="EBI-10969203">
        <id>O14524-2</id>
        <label>NEMP1</label>
    </interactant>
    <organismsDiffer>false</organismsDiffer>
    <experiments>3</experiments>
</comment>
<comment type="interaction">
    <interactant intactId="EBI-12237619">
        <id>O75841</id>
    </interactant>
    <interactant intactId="EBI-716063">
        <id>Q13113</id>
        <label>PDZK1IP1</label>
    </interactant>
    <organismsDiffer>false</organismsDiffer>
    <experiments>3</experiments>
</comment>
<comment type="interaction">
    <interactant intactId="EBI-12237619">
        <id>O75841</id>
    </interactant>
    <interactant intactId="EBI-10285708">
        <id>Q96FE7</id>
        <label>PIK3IP1</label>
    </interactant>
    <organismsDiffer>false</organismsDiffer>
    <experiments>3</experiments>
</comment>
<comment type="interaction">
    <interactant intactId="EBI-12237619">
        <id>O75841</id>
    </interactant>
    <interactant intactId="EBI-10485931">
        <id>Q5VZY2</id>
        <label>PLPP4</label>
    </interactant>
    <organismsDiffer>false</organismsDiffer>
    <experiments>3</experiments>
</comment>
<comment type="interaction">
    <interactant intactId="EBI-12237619">
        <id>O75841</id>
    </interactant>
    <interactant intactId="EBI-15853497">
        <id>Q9UBD6</id>
        <label>RHCG</label>
    </interactant>
    <organismsDiffer>false</organismsDiffer>
    <experiments>3</experiments>
</comment>
<comment type="interaction">
    <interactant intactId="EBI-12237619">
        <id>O75841</id>
    </interactant>
    <interactant intactId="EBI-3920694">
        <id>Q9NR31</id>
        <label>SAR1A</label>
    </interactant>
    <organismsDiffer>false</organismsDiffer>
    <experiments>3</experiments>
</comment>
<comment type="interaction">
    <interactant intactId="EBI-12237619">
        <id>O75841</id>
    </interactant>
    <interactant intactId="EBI-16769525">
        <id>Q5VUM1</id>
        <label>SDHAF4</label>
    </interactant>
    <organismsDiffer>false</organismsDiffer>
    <experiments>3</experiments>
</comment>
<comment type="interaction">
    <interactant intactId="EBI-12237619">
        <id>O75841</id>
    </interactant>
    <interactant intactId="EBI-18035902">
        <id>Q96DD7</id>
        <label>SHISA4</label>
    </interactant>
    <organismsDiffer>false</organismsDiffer>
    <experiments>3</experiments>
</comment>
<comment type="interaction">
    <interactant intactId="EBI-12237619">
        <id>O75841</id>
    </interactant>
    <interactant intactId="EBI-6977215">
        <id>Q9Y3P8</id>
        <label>SIT1</label>
    </interactant>
    <organismsDiffer>false</organismsDiffer>
    <experiments>3</experiments>
</comment>
<comment type="interaction">
    <interactant intactId="EBI-12237619">
        <id>O75841</id>
    </interactant>
    <interactant intactId="EBI-18114847">
        <id>Q12908</id>
        <label>SLC10A2</label>
    </interactant>
    <organismsDiffer>false</organismsDiffer>
    <experiments>3</experiments>
</comment>
<comment type="interaction">
    <interactant intactId="EBI-12237619">
        <id>O75841</id>
    </interactant>
    <interactant intactId="EBI-17295964">
        <id>Q9NQQ7-3</id>
        <label>SLC35C2</label>
    </interactant>
    <organismsDiffer>false</organismsDiffer>
    <experiments>3</experiments>
</comment>
<comment type="interaction">
    <interactant intactId="EBI-12237619">
        <id>O75841</id>
    </interactant>
    <interactant intactId="EBI-12898013">
        <id>Q9NP94</id>
        <label>SLC39A2</label>
    </interactant>
    <organismsDiffer>false</organismsDiffer>
    <experiments>3</experiments>
</comment>
<comment type="interaction">
    <interactant intactId="EBI-12237619">
        <id>O75841</id>
    </interactant>
    <interactant intactId="EBI-12078338">
        <id>O43278-2</id>
        <label>SPINT1</label>
    </interactant>
    <organismsDiffer>false</organismsDiffer>
    <experiments>3</experiments>
</comment>
<comment type="interaction">
    <interactant intactId="EBI-12237619">
        <id>O75841</id>
    </interactant>
    <interactant intactId="EBI-17280858">
        <id>Q8WWF3</id>
        <label>SSMEM1</label>
    </interactant>
    <organismsDiffer>false</organismsDiffer>
    <experiments>3</experiments>
</comment>
<comment type="interaction">
    <interactant intactId="EBI-12237619">
        <id>O75841</id>
    </interactant>
    <interactant intactId="EBI-712466">
        <id>Q16623</id>
        <label>STX1A</label>
    </interactant>
    <organismsDiffer>false</organismsDiffer>
    <experiments>3</experiments>
</comment>
<comment type="interaction">
    <interactant intactId="EBI-12237619">
        <id>O75841</id>
    </interactant>
    <interactant intactId="EBI-19129467">
        <id>Q86SS6</id>
        <label>SYT9</label>
    </interactant>
    <organismsDiffer>false</organismsDiffer>
    <experiments>3</experiments>
</comment>
<comment type="interaction">
    <interactant intactId="EBI-12237619">
        <id>O75841</id>
    </interactant>
    <interactant intactId="EBI-7238458">
        <id>Q8IV31</id>
        <label>TMEM139</label>
    </interactant>
    <organismsDiffer>false</organismsDiffer>
    <experiments>3</experiments>
</comment>
<comment type="interaction">
    <interactant intactId="EBI-12237619">
        <id>O75841</id>
    </interactant>
    <interactant intactId="EBI-10982110">
        <id>Q96Q45-2</id>
        <label>TMEM237</label>
    </interactant>
    <organismsDiffer>false</organismsDiffer>
    <experiments>3</experiments>
</comment>
<comment type="interaction">
    <interactant intactId="EBI-12237619">
        <id>O75841</id>
    </interactant>
    <interactant intactId="EBI-17180389">
        <id>E9PQX1</id>
        <label>TMEM262</label>
    </interactant>
    <organismsDiffer>false</organismsDiffer>
    <experiments>3</experiments>
</comment>
<comment type="interaction">
    <interactant intactId="EBI-12237619">
        <id>O75841</id>
    </interactant>
    <interactant intactId="EBI-3923061">
        <id>Q96B21</id>
        <label>TMEM45B</label>
    </interactant>
    <organismsDiffer>false</organismsDiffer>
    <experiments>3</experiments>
</comment>
<comment type="interaction">
    <interactant intactId="EBI-12237619">
        <id>O75841</id>
    </interactant>
    <interactant intactId="EBI-3922833">
        <id>Q969K7</id>
        <label>TMEM54</label>
    </interactant>
    <organismsDiffer>false</organismsDiffer>
    <experiments>3</experiments>
</comment>
<comment type="interaction">
    <interactant intactId="EBI-12237619">
        <id>O75841</id>
    </interactant>
    <interactant intactId="EBI-13345425">
        <id>Q6ZNR0-2</id>
        <label>TMEM91</label>
    </interactant>
    <organismsDiffer>false</organismsDiffer>
    <experiments>3</experiments>
</comment>
<comment type="interaction">
    <interactant intactId="EBI-12237619">
        <id>O75841</id>
    </interactant>
    <interactant intactId="EBI-2820477">
        <id>Q71RG4</id>
        <label>TMUB2</label>
    </interactant>
    <organismsDiffer>false</organismsDiffer>
    <experiments>3</experiments>
</comment>
<comment type="interaction">
    <interactant intactId="EBI-12237619">
        <id>O75841</id>
    </interactant>
    <interactant intactId="EBI-18323486">
        <id>Q86XK7</id>
        <label>VSIG1</label>
    </interactant>
    <organismsDiffer>false</organismsDiffer>
    <experiments>3</experiments>
</comment>
<comment type="subcellular location">
    <subcellularLocation>
        <location>Membrane</location>
        <topology>Multi-pass membrane protein</topology>
    </subcellularLocation>
</comment>
<comment type="tissue specificity">
    <text>Bladder epithelium.</text>
</comment>
<comment type="PTM">
    <text evidence="1">N-glycosylated with high-mannose oligosaccharides.</text>
</comment>
<comment type="similarity">
    <text evidence="8">Belongs to the tetraspanin (TM4SF) family.</text>
</comment>
<dbReference type="EMBL" id="AB015234">
    <property type="protein sequence ID" value="BAA33724.1"/>
    <property type="molecule type" value="mRNA"/>
</dbReference>
<dbReference type="EMBL" id="AF042331">
    <property type="protein sequence ID" value="AAC77794.1"/>
    <property type="molecule type" value="mRNA"/>
</dbReference>
<dbReference type="EMBL" id="AB002155">
    <property type="protein sequence ID" value="BAA88878.1"/>
    <property type="molecule type" value="mRNA"/>
</dbReference>
<dbReference type="EMBL" id="AC083800">
    <property type="status" value="NOT_ANNOTATED_CDS"/>
    <property type="molecule type" value="Genomic_DNA"/>
</dbReference>
<dbReference type="EMBL" id="BC063568">
    <property type="protein sequence ID" value="AAH63568.1"/>
    <property type="molecule type" value="mRNA"/>
</dbReference>
<dbReference type="EMBL" id="AF082888">
    <property type="protein sequence ID" value="AAD09401.1"/>
    <property type="molecule type" value="mRNA"/>
</dbReference>
<dbReference type="EMBL" id="AF067147">
    <property type="protein sequence ID" value="AAC17446.1"/>
    <property type="molecule type" value="Genomic_DNA"/>
</dbReference>
<dbReference type="CCDS" id="CCDS2985.1"/>
<dbReference type="RefSeq" id="NP_008883.2">
    <property type="nucleotide sequence ID" value="NM_006952.3"/>
</dbReference>
<dbReference type="SMR" id="O75841"/>
<dbReference type="BioGRID" id="113195">
    <property type="interactions" value="62"/>
</dbReference>
<dbReference type="FunCoup" id="O75841">
    <property type="interactions" value="81"/>
</dbReference>
<dbReference type="IntAct" id="O75841">
    <property type="interactions" value="50"/>
</dbReference>
<dbReference type="STRING" id="9606.ENSP00000264234"/>
<dbReference type="TCDB" id="8.A.40.7.2">
    <property type="family name" value="the tetraspanin (tetraspanin) family"/>
</dbReference>
<dbReference type="GlyGen" id="O75841">
    <property type="glycosylation" value="1 site, 9 N-linked glycans (1 site)"/>
</dbReference>
<dbReference type="iPTMnet" id="O75841"/>
<dbReference type="PhosphoSitePlus" id="O75841"/>
<dbReference type="BioMuta" id="UPK1B"/>
<dbReference type="jPOST" id="O75841"/>
<dbReference type="MassIVE" id="O75841"/>
<dbReference type="PaxDb" id="9606-ENSP00000264234"/>
<dbReference type="PeptideAtlas" id="O75841"/>
<dbReference type="ProteomicsDB" id="50224"/>
<dbReference type="Pumba" id="O75841"/>
<dbReference type="Antibodypedia" id="32685">
    <property type="antibodies" value="298 antibodies from 28 providers"/>
</dbReference>
<dbReference type="DNASU" id="7348"/>
<dbReference type="Ensembl" id="ENST00000264234.8">
    <property type="protein sequence ID" value="ENSP00000264234.3"/>
    <property type="gene ID" value="ENSG00000114638.8"/>
</dbReference>
<dbReference type="GeneID" id="7348"/>
<dbReference type="KEGG" id="hsa:7348"/>
<dbReference type="MANE-Select" id="ENST00000264234.8">
    <property type="protein sequence ID" value="ENSP00000264234.3"/>
    <property type="RefSeq nucleotide sequence ID" value="NM_006952.4"/>
    <property type="RefSeq protein sequence ID" value="NP_008883.2"/>
</dbReference>
<dbReference type="UCSC" id="uc003ecc.4">
    <property type="organism name" value="human"/>
</dbReference>
<dbReference type="AGR" id="HGNC:12578"/>
<dbReference type="CTD" id="7348"/>
<dbReference type="DisGeNET" id="7348"/>
<dbReference type="GeneCards" id="UPK1B"/>
<dbReference type="HGNC" id="HGNC:12578">
    <property type="gene designation" value="UPK1B"/>
</dbReference>
<dbReference type="HPA" id="ENSG00000114638">
    <property type="expression patterns" value="Tissue enhanced (stomach, urinary bladder)"/>
</dbReference>
<dbReference type="MIM" id="602380">
    <property type="type" value="gene"/>
</dbReference>
<dbReference type="neXtProt" id="NX_O75841"/>
<dbReference type="OpenTargets" id="ENSG00000114638"/>
<dbReference type="PharmGKB" id="PA37210"/>
<dbReference type="VEuPathDB" id="HostDB:ENSG00000114638"/>
<dbReference type="eggNOG" id="KOG3882">
    <property type="taxonomic scope" value="Eukaryota"/>
</dbReference>
<dbReference type="GeneTree" id="ENSGT00940000160779"/>
<dbReference type="InParanoid" id="O75841"/>
<dbReference type="OMA" id="EKCCGVN"/>
<dbReference type="OrthoDB" id="5982705at2759"/>
<dbReference type="PAN-GO" id="O75841">
    <property type="GO annotations" value="1 GO annotation based on evolutionary models"/>
</dbReference>
<dbReference type="PhylomeDB" id="O75841"/>
<dbReference type="TreeFam" id="TF335659"/>
<dbReference type="PathwayCommons" id="O75841"/>
<dbReference type="SignaLink" id="O75841"/>
<dbReference type="BioGRID-ORCS" id="7348">
    <property type="hits" value="9 hits in 1133 CRISPR screens"/>
</dbReference>
<dbReference type="ChiTaRS" id="UPK1B">
    <property type="organism name" value="human"/>
</dbReference>
<dbReference type="GeneWiki" id="UPK1B"/>
<dbReference type="GenomeRNAi" id="7348"/>
<dbReference type="Pharos" id="O75841">
    <property type="development level" value="Tbio"/>
</dbReference>
<dbReference type="PRO" id="PR:O75841"/>
<dbReference type="Proteomes" id="UP000005640">
    <property type="component" value="Chromosome 3"/>
</dbReference>
<dbReference type="RNAct" id="O75841">
    <property type="molecule type" value="protein"/>
</dbReference>
<dbReference type="Bgee" id="ENSG00000114638">
    <property type="expression patterns" value="Expressed in palpebral conjunctiva and 110 other cell types or tissues"/>
</dbReference>
<dbReference type="ExpressionAtlas" id="O75841">
    <property type="expression patterns" value="baseline and differential"/>
</dbReference>
<dbReference type="GO" id="GO:0120001">
    <property type="term" value="C:apical plasma membrane urothelial plaque"/>
    <property type="evidence" value="ECO:0007669"/>
    <property type="project" value="Ensembl"/>
</dbReference>
<dbReference type="GO" id="GO:0070062">
    <property type="term" value="C:extracellular exosome"/>
    <property type="evidence" value="ECO:0007005"/>
    <property type="project" value="UniProtKB"/>
</dbReference>
<dbReference type="GO" id="GO:0016020">
    <property type="term" value="C:membrane"/>
    <property type="evidence" value="ECO:0000303"/>
    <property type="project" value="UniProtKB"/>
</dbReference>
<dbReference type="GO" id="GO:0005198">
    <property type="term" value="F:structural molecule activity"/>
    <property type="evidence" value="ECO:0000303"/>
    <property type="project" value="UniProtKB"/>
</dbReference>
<dbReference type="GO" id="GO:0030855">
    <property type="term" value="P:epithelial cell differentiation"/>
    <property type="evidence" value="ECO:0000314"/>
    <property type="project" value="UniProtKB"/>
</dbReference>
<dbReference type="GO" id="GO:0009617">
    <property type="term" value="P:response to bacterium"/>
    <property type="evidence" value="ECO:0007669"/>
    <property type="project" value="Ensembl"/>
</dbReference>
<dbReference type="CDD" id="cd03156">
    <property type="entry name" value="uroplakin_I_like_LEL"/>
    <property type="match status" value="1"/>
</dbReference>
<dbReference type="FunFam" id="1.10.1450.10:FF:000014">
    <property type="entry name" value="Tetraspanin"/>
    <property type="match status" value="1"/>
</dbReference>
<dbReference type="Gene3D" id="1.10.1450.10">
    <property type="entry name" value="Tetraspanin"/>
    <property type="match status" value="1"/>
</dbReference>
<dbReference type="InterPro" id="IPR018499">
    <property type="entry name" value="Tetraspanin/Peripherin"/>
</dbReference>
<dbReference type="InterPro" id="IPR008952">
    <property type="entry name" value="Tetraspanin_EC2_sf"/>
</dbReference>
<dbReference type="PANTHER" id="PTHR47110">
    <property type="entry name" value="TESTIS-SPECIFIC EXPRESSED PROTEIN 55"/>
    <property type="match status" value="1"/>
</dbReference>
<dbReference type="PANTHER" id="PTHR47110:SF2">
    <property type="entry name" value="UROPLAKIN-1B"/>
    <property type="match status" value="1"/>
</dbReference>
<dbReference type="Pfam" id="PF00335">
    <property type="entry name" value="Tetraspanin"/>
    <property type="match status" value="1"/>
</dbReference>
<dbReference type="PRINTS" id="PR00259">
    <property type="entry name" value="TMFOUR"/>
</dbReference>
<dbReference type="SUPFAM" id="SSF48652">
    <property type="entry name" value="Tetraspanin"/>
    <property type="match status" value="1"/>
</dbReference>
<keyword id="KW-0325">Glycoprotein</keyword>
<keyword id="KW-0472">Membrane</keyword>
<keyword id="KW-1267">Proteomics identification</keyword>
<keyword id="KW-1185">Reference proteome</keyword>
<keyword id="KW-0812">Transmembrane</keyword>
<keyword id="KW-1133">Transmembrane helix</keyword>
<organism>
    <name type="scientific">Homo sapiens</name>
    <name type="common">Human</name>
    <dbReference type="NCBI Taxonomy" id="9606"/>
    <lineage>
        <taxon>Eukaryota</taxon>
        <taxon>Metazoa</taxon>
        <taxon>Chordata</taxon>
        <taxon>Craniata</taxon>
        <taxon>Vertebrata</taxon>
        <taxon>Euteleostomi</taxon>
        <taxon>Mammalia</taxon>
        <taxon>Eutheria</taxon>
        <taxon>Euarchontoglires</taxon>
        <taxon>Primates</taxon>
        <taxon>Haplorrhini</taxon>
        <taxon>Catarrhini</taxon>
        <taxon>Hominidae</taxon>
        <taxon>Homo</taxon>
    </lineage>
</organism>
<feature type="chain" id="PRO_0000219289" description="Uroplakin-1b">
    <location>
        <begin position="1"/>
        <end position="260"/>
    </location>
</feature>
<feature type="topological domain" description="Cytoplasmic" evidence="2">
    <location>
        <begin position="1"/>
        <end position="15"/>
    </location>
</feature>
<feature type="transmembrane region" description="Helical" evidence="2">
    <location>
        <begin position="16"/>
        <end position="36"/>
    </location>
</feature>
<feature type="topological domain" description="Extracellular" evidence="2">
    <location>
        <begin position="37"/>
        <end position="60"/>
    </location>
</feature>
<feature type="transmembrane region" description="Helical" evidence="2">
    <location>
        <begin position="61"/>
        <end position="81"/>
    </location>
</feature>
<feature type="topological domain" description="Cytoplasmic" evidence="2">
    <location>
        <begin position="82"/>
        <end position="86"/>
    </location>
</feature>
<feature type="transmembrane region" description="Helical" evidence="2">
    <location>
        <begin position="87"/>
        <end position="107"/>
    </location>
</feature>
<feature type="topological domain" description="Extracellular" evidence="2">
    <location>
        <begin position="108"/>
        <end position="229"/>
    </location>
</feature>
<feature type="transmembrane region" description="Helical" evidence="2">
    <location>
        <begin position="230"/>
        <end position="250"/>
    </location>
</feature>
<feature type="topological domain" description="Cytoplasmic" evidence="2">
    <location>
        <begin position="251"/>
        <end position="260"/>
    </location>
</feature>
<feature type="sequence variant" id="VAR_028780" description="In dbSNP:rs9840317." evidence="3 4 5 6 7">
    <original>Q</original>
    <variation>R</variation>
    <location>
        <position position="113"/>
    </location>
</feature>
<feature type="sequence conflict" description="In Ref. 1; BAA33724." evidence="8" ref="1">
    <original>N</original>
    <variation>D</variation>
    <location>
        <position position="137"/>
    </location>
</feature>
<evidence type="ECO:0000250" key="1"/>
<evidence type="ECO:0000255" key="2"/>
<evidence type="ECO:0000269" key="3">
    <source>
    </source>
</evidence>
<evidence type="ECO:0000269" key="4">
    <source>
    </source>
</evidence>
<evidence type="ECO:0000269" key="5">
    <source>
    </source>
</evidence>
<evidence type="ECO:0000269" key="6">
    <source>
    </source>
</evidence>
<evidence type="ECO:0000269" key="7">
    <source>
    </source>
</evidence>
<evidence type="ECO:0000305" key="8"/>